<evidence type="ECO:0000250" key="1"/>
<evidence type="ECO:0000250" key="2">
    <source>
        <dbReference type="UniProtKB" id="O17433"/>
    </source>
</evidence>
<evidence type="ECO:0000250" key="3">
    <source>
        <dbReference type="UniProtKB" id="P30041"/>
    </source>
</evidence>
<evidence type="ECO:0000250" key="4">
    <source>
        <dbReference type="UniProtKB" id="P34227"/>
    </source>
</evidence>
<evidence type="ECO:0000255" key="5">
    <source>
        <dbReference type="PROSITE-ProRule" id="PRU00691"/>
    </source>
</evidence>
<evidence type="ECO:0000305" key="6"/>
<dbReference type="EC" id="1.11.1.-" evidence="2"/>
<dbReference type="EMBL" id="U31052">
    <property type="protein sequence ID" value="AAC27392.1"/>
    <property type="molecule type" value="mRNA"/>
</dbReference>
<dbReference type="EMBL" id="U09385">
    <property type="protein sequence ID" value="AAA50214.2"/>
    <property type="molecule type" value="mRNA"/>
</dbReference>
<dbReference type="SMR" id="P52570"/>
<dbReference type="STRING" id="6282.P52570"/>
<dbReference type="PeroxiBase" id="4943">
    <property type="entry name" value="Ovo1CysPrx"/>
</dbReference>
<dbReference type="HOGENOM" id="CLU_042529_4_1_1"/>
<dbReference type="Proteomes" id="UP000024404">
    <property type="component" value="Unassembled WGS sequence"/>
</dbReference>
<dbReference type="GO" id="GO:0005829">
    <property type="term" value="C:cytosol"/>
    <property type="evidence" value="ECO:0007669"/>
    <property type="project" value="TreeGrafter"/>
</dbReference>
<dbReference type="GO" id="GO:0005739">
    <property type="term" value="C:mitochondrion"/>
    <property type="evidence" value="ECO:0007669"/>
    <property type="project" value="TreeGrafter"/>
</dbReference>
<dbReference type="GO" id="GO:0051920">
    <property type="term" value="F:peroxiredoxin activity"/>
    <property type="evidence" value="ECO:0007669"/>
    <property type="project" value="InterPro"/>
</dbReference>
<dbReference type="GO" id="GO:0045454">
    <property type="term" value="P:cell redox homeostasis"/>
    <property type="evidence" value="ECO:0007669"/>
    <property type="project" value="TreeGrafter"/>
</dbReference>
<dbReference type="CDD" id="cd03016">
    <property type="entry name" value="PRX_1cys"/>
    <property type="match status" value="1"/>
</dbReference>
<dbReference type="FunFam" id="3.30.1020.10:FF:000001">
    <property type="entry name" value="1-Cys peroxiredoxin"/>
    <property type="match status" value="1"/>
</dbReference>
<dbReference type="FunFam" id="3.40.30.10:FF:000011">
    <property type="entry name" value="Peroxiredoxin PRX1"/>
    <property type="match status" value="1"/>
</dbReference>
<dbReference type="Gene3D" id="3.30.1020.10">
    <property type="entry name" value="Antioxidant, Horf6, Chain A, domain2"/>
    <property type="match status" value="1"/>
</dbReference>
<dbReference type="Gene3D" id="3.40.30.10">
    <property type="entry name" value="Glutaredoxin"/>
    <property type="match status" value="1"/>
</dbReference>
<dbReference type="InterPro" id="IPR000866">
    <property type="entry name" value="AhpC/TSA"/>
</dbReference>
<dbReference type="InterPro" id="IPR024706">
    <property type="entry name" value="Peroxiredoxin_AhpC-typ"/>
</dbReference>
<dbReference type="InterPro" id="IPR019479">
    <property type="entry name" value="Peroxiredoxin_C"/>
</dbReference>
<dbReference type="InterPro" id="IPR045020">
    <property type="entry name" value="PRX_1cys"/>
</dbReference>
<dbReference type="InterPro" id="IPR036249">
    <property type="entry name" value="Thioredoxin-like_sf"/>
</dbReference>
<dbReference type="InterPro" id="IPR013766">
    <property type="entry name" value="Thioredoxin_domain"/>
</dbReference>
<dbReference type="PANTHER" id="PTHR43503">
    <property type="entry name" value="MCG48959-RELATED"/>
    <property type="match status" value="1"/>
</dbReference>
<dbReference type="PANTHER" id="PTHR43503:SF4">
    <property type="entry name" value="PEROXIREDOXIN-6"/>
    <property type="match status" value="1"/>
</dbReference>
<dbReference type="Pfam" id="PF10417">
    <property type="entry name" value="1-cysPrx_C"/>
    <property type="match status" value="1"/>
</dbReference>
<dbReference type="Pfam" id="PF00578">
    <property type="entry name" value="AhpC-TSA"/>
    <property type="match status" value="1"/>
</dbReference>
<dbReference type="PIRSF" id="PIRSF000239">
    <property type="entry name" value="AHPC"/>
    <property type="match status" value="1"/>
</dbReference>
<dbReference type="SUPFAM" id="SSF52833">
    <property type="entry name" value="Thioredoxin-like"/>
    <property type="match status" value="1"/>
</dbReference>
<dbReference type="PROSITE" id="PS51352">
    <property type="entry name" value="THIOREDOXIN_2"/>
    <property type="match status" value="1"/>
</dbReference>
<organism>
    <name type="scientific">Onchocerca volvulus</name>
    <dbReference type="NCBI Taxonomy" id="6282"/>
    <lineage>
        <taxon>Eukaryota</taxon>
        <taxon>Metazoa</taxon>
        <taxon>Ecdysozoa</taxon>
        <taxon>Nematoda</taxon>
        <taxon>Chromadorea</taxon>
        <taxon>Rhabditida</taxon>
        <taxon>Spirurina</taxon>
        <taxon>Spiruromorpha</taxon>
        <taxon>Filarioidea</taxon>
        <taxon>Onchocercidae</taxon>
        <taxon>Onchocerca</taxon>
    </lineage>
</organism>
<feature type="chain" id="PRO_0000135105" description="1-Cys peroxiredoxin">
    <location>
        <begin position="1"/>
        <end position="232"/>
    </location>
</feature>
<feature type="domain" description="Thioredoxin" evidence="5">
    <location>
        <begin position="5"/>
        <end position="176"/>
    </location>
</feature>
<feature type="active site" evidence="1">
    <location>
        <position position="49"/>
    </location>
</feature>
<feature type="active site" description="Cysteine sulfenic acid (-SOH) intermediate" evidence="3">
    <location>
        <position position="49"/>
    </location>
</feature>
<comment type="function">
    <text evidence="2">Thiol-specific peroxidase that catalyzes the reduction of hydrogen peroxide and organic hydroperoxides to water and alcohols, respectively. Plays a role in cell protection against oxidative stress by detoxifying peroxides.</text>
</comment>
<comment type="catalytic activity">
    <reaction evidence="2">
        <text>a hydroperoxide + [protein]-dithiol = [protein]-disulfide + an alcohol + H2O</text>
        <dbReference type="Rhea" id="RHEA:10008"/>
        <dbReference type="Rhea" id="RHEA-COMP:10593"/>
        <dbReference type="Rhea" id="RHEA-COMP:10594"/>
        <dbReference type="ChEBI" id="CHEBI:15377"/>
        <dbReference type="ChEBI" id="CHEBI:29950"/>
        <dbReference type="ChEBI" id="CHEBI:30879"/>
        <dbReference type="ChEBI" id="CHEBI:35924"/>
        <dbReference type="ChEBI" id="CHEBI:50058"/>
    </reaction>
</comment>
<comment type="miscellaneous">
    <text evidence="4">The active site is a conserved redox-active cysteine residue, the peroxidatic cysteine (C(P)), which makes the nucleophilic attack on the peroxide substrate. The peroxide oxidizes the C(P)-SH to cysteine sulfenic acid (C(P)-SOH), which then reacts with another cysteine residue, the resolving cysteine (C(R)), to form a disulfide bridge. The disulfide is subsequently reduced by an appropriate electron donor to complete the catalytic cycle. In this 1-Cys peroxiredoxin, no C(R) is present and C(P) instead forms a disulfide with a cysteine from another protein or with a small thiol molecule.</text>
</comment>
<comment type="similarity">
    <text evidence="6">Belongs to the peroxiredoxin family. Prx6 subfamily.</text>
</comment>
<proteinExistence type="evidence at transcript level"/>
<name>1CPX_ONCVO</name>
<sequence length="232" mass="25926">MCAPSGPGNKFPDFQAETNEGFISSFYDWIGKDSWAILFSHPRDFTPVCTTELARLVQLAPEFKKRNVKLIGLSCDSADSHSKWADDILALYKMKCVGCDSEKKLPYPIIADEDRSLATELGMMDPDERDEKGNTLTARCVFIIGSDKTLKLSILYPATTGRNFDEILRVVDSLQLTAVKLVATPVDWKDGDDCVVLPTIDDNEAKKLFGEKIHTIDLPSGKHYLRMVPHPK</sequence>
<keyword id="KW-0049">Antioxidant</keyword>
<keyword id="KW-0560">Oxidoreductase</keyword>
<keyword id="KW-0575">Peroxidase</keyword>
<keyword id="KW-0676">Redox-active center</keyword>
<keyword id="KW-1185">Reference proteome</keyword>
<reference key="1">
    <citation type="submission" date="1995-07" db="EMBL/GenBank/DDBJ databases">
        <authorList>
            <person name="Chandrashekar R."/>
            <person name="Curits K.C."/>
            <person name="Weil G.J."/>
        </authorList>
    </citation>
    <scope>NUCLEOTIDE SEQUENCE [MRNA]</scope>
</reference>
<reference key="2">
    <citation type="submission" date="1994-05" db="EMBL/GenBank/DDBJ databases">
        <authorList>
            <person name="Chandrashekar R."/>
            <person name="Curtis K."/>
            <person name="Weil G.J."/>
        </authorList>
    </citation>
    <scope>NUCLEOTIDE SEQUENCE [MRNA] OF 62-222</scope>
</reference>
<gene>
    <name type="primary">TSA</name>
</gene>
<protein>
    <recommendedName>
        <fullName>1-Cys peroxiredoxin</fullName>
        <ecNumber evidence="2">1.11.1.-</ecNumber>
    </recommendedName>
    <alternativeName>
        <fullName>Thiol-specific antioxidant</fullName>
    </alternativeName>
    <alternativeName>
        <fullName>Thioredoxin peroxidase</fullName>
    </alternativeName>
</protein>
<accession>P52570</accession>